<gene>
    <name type="primary">rhgE</name>
</gene>
<protein>
    <recommendedName>
        <fullName>Probable rhamnogalacturonase E</fullName>
        <shortName>RGase E</shortName>
        <shortName>RHG E</shortName>
        <ecNumber>3.2.1.-</ecNumber>
    </recommendedName>
</protein>
<comment type="function">
    <text evidence="1">Pectinolytic enzymes consist of four classes of enzymes: pectine lyase, polygalacturonase, pectin methylesterase and rhamnogalacturonase. Hydrolyzes alpha-D-galacturonopyranosyl-(1,2)-alpha-L-rhamnopyranosyl linkages in the backbone of the hairy regions of pectins (By similarity).</text>
</comment>
<comment type="subcellular location">
    <subcellularLocation>
        <location evidence="1">Secreted</location>
    </subcellularLocation>
</comment>
<comment type="similarity">
    <text evidence="3">Belongs to the glycosyl hydrolase 28 family.</text>
</comment>
<dbReference type="EC" id="3.2.1.-"/>
<dbReference type="EMBL" id="DQ417224">
    <property type="protein sequence ID" value="ABD67156.1"/>
    <property type="molecule type" value="Genomic_DNA"/>
</dbReference>
<dbReference type="SMR" id="Q1ZZM3"/>
<dbReference type="CAZy" id="GH28">
    <property type="family name" value="Glycoside Hydrolase Family 28"/>
</dbReference>
<dbReference type="GlyCosmos" id="Q1ZZM3">
    <property type="glycosylation" value="7 sites, No reported glycans"/>
</dbReference>
<dbReference type="VEuPathDB" id="FungiDB:An11g08700"/>
<dbReference type="VEuPathDB" id="FungiDB:ASPNIDRAFT2_1160216"/>
<dbReference type="VEuPathDB" id="FungiDB:ATCC64974_93570"/>
<dbReference type="VEuPathDB" id="FungiDB:M747DRAFT_3040"/>
<dbReference type="GO" id="GO:0005576">
    <property type="term" value="C:extracellular region"/>
    <property type="evidence" value="ECO:0007669"/>
    <property type="project" value="UniProtKB-SubCell"/>
</dbReference>
<dbReference type="GO" id="GO:0004650">
    <property type="term" value="F:polygalacturonase activity"/>
    <property type="evidence" value="ECO:0007669"/>
    <property type="project" value="InterPro"/>
</dbReference>
<dbReference type="GO" id="GO:0046576">
    <property type="term" value="F:rhamnogalacturonan alpha-L-rhamnopyranosyl-(1-&gt;4)-alpha-D-galactopyranosyluronide lyase activity"/>
    <property type="evidence" value="ECO:0007669"/>
    <property type="project" value="UniProtKB-ARBA"/>
</dbReference>
<dbReference type="GO" id="GO:0071555">
    <property type="term" value="P:cell wall organization"/>
    <property type="evidence" value="ECO:0007669"/>
    <property type="project" value="UniProtKB-KW"/>
</dbReference>
<dbReference type="GO" id="GO:0000272">
    <property type="term" value="P:polysaccharide catabolic process"/>
    <property type="evidence" value="ECO:0007669"/>
    <property type="project" value="UniProtKB-KW"/>
</dbReference>
<dbReference type="Gene3D" id="2.160.20.10">
    <property type="entry name" value="Single-stranded right-handed beta-helix, Pectin lyase-like"/>
    <property type="match status" value="1"/>
</dbReference>
<dbReference type="InterPro" id="IPR000743">
    <property type="entry name" value="Glyco_hydro_28"/>
</dbReference>
<dbReference type="InterPro" id="IPR012334">
    <property type="entry name" value="Pectin_lyas_fold"/>
</dbReference>
<dbReference type="InterPro" id="IPR011050">
    <property type="entry name" value="Pectin_lyase_fold/virulence"/>
</dbReference>
<dbReference type="PANTHER" id="PTHR31736">
    <property type="match status" value="1"/>
</dbReference>
<dbReference type="PANTHER" id="PTHR31736:SF19">
    <property type="entry name" value="PECTIN LYASE SUPERFAMILY PROTEIN-RELATED"/>
    <property type="match status" value="1"/>
</dbReference>
<dbReference type="Pfam" id="PF00295">
    <property type="entry name" value="Glyco_hydro_28"/>
    <property type="match status" value="1"/>
</dbReference>
<dbReference type="SUPFAM" id="SSF51126">
    <property type="entry name" value="Pectin lyase-like"/>
    <property type="match status" value="1"/>
</dbReference>
<proteinExistence type="inferred from homology"/>
<feature type="signal peptide" evidence="2">
    <location>
        <begin position="1"/>
        <end position="22"/>
    </location>
</feature>
<feature type="chain" id="PRO_0000394958" description="Probable rhamnogalacturonase E">
    <location>
        <begin position="23"/>
        <end position="450"/>
    </location>
</feature>
<feature type="active site" description="Proton donor" evidence="1">
    <location>
        <position position="222"/>
    </location>
</feature>
<feature type="active site" evidence="1">
    <location>
        <position position="297"/>
    </location>
</feature>
<feature type="glycosylation site" description="N-linked (GlcNAc...) asparagine" evidence="2">
    <location>
        <position position="54"/>
    </location>
</feature>
<feature type="glycosylation site" description="N-linked (GlcNAc...) asparagine" evidence="2">
    <location>
        <position position="92"/>
    </location>
</feature>
<feature type="glycosylation site" description="N-linked (GlcNAc...) asparagine" evidence="2">
    <location>
        <position position="131"/>
    </location>
</feature>
<feature type="glycosylation site" description="N-linked (GlcNAc...) asparagine" evidence="2">
    <location>
        <position position="242"/>
    </location>
</feature>
<feature type="glycosylation site" description="N-linked (GlcNAc...) asparagine" evidence="2">
    <location>
        <position position="257"/>
    </location>
</feature>
<feature type="glycosylation site" description="N-linked (GlcNAc...) asparagine" evidence="2">
    <location>
        <position position="324"/>
    </location>
</feature>
<feature type="glycosylation site" description="N-linked (GlcNAc...) asparagine" evidence="2">
    <location>
        <position position="329"/>
    </location>
</feature>
<feature type="disulfide bond" evidence="1">
    <location>
        <begin position="43"/>
        <end position="69"/>
    </location>
</feature>
<feature type="disulfide bond" evidence="1">
    <location>
        <begin position="224"/>
        <end position="241"/>
    </location>
</feature>
<feature type="disulfide bond" evidence="1">
    <location>
        <begin position="347"/>
        <end position="353"/>
    </location>
</feature>
<feature type="disulfide bond" evidence="1">
    <location>
        <begin position="375"/>
        <end position="384"/>
    </location>
</feature>
<keyword id="KW-0119">Carbohydrate metabolism</keyword>
<keyword id="KW-0961">Cell wall biogenesis/degradation</keyword>
<keyword id="KW-1015">Disulfide bond</keyword>
<keyword id="KW-0325">Glycoprotein</keyword>
<keyword id="KW-0326">Glycosidase</keyword>
<keyword id="KW-0378">Hydrolase</keyword>
<keyword id="KW-0624">Polysaccharide degradation</keyword>
<keyword id="KW-0964">Secreted</keyword>
<keyword id="KW-0732">Signal</keyword>
<name>RHGE_ASPNG</name>
<evidence type="ECO:0000250" key="1"/>
<evidence type="ECO:0000255" key="2"/>
<evidence type="ECO:0000305" key="3"/>
<accession>Q1ZZM3</accession>
<sequence length="450" mass="48425">MTWSTSFLSVHFFAFITTSIHAQLTGSVGPLTSVSDKAAVKTCNVLDYGARSDNTTDVGQPIIDAFADCGSGGLIYIPEGDYLLKNWISLENGSAWAIQLDGVLYRDSSPSSQSYMFEISGGRDFELFSSNATGAIQGSGYLYHRDDTYTGPRMLHISGVSDWSVHDLVLVDSPMFHFVIDGGYNGEVYNMAIRGADHGGLDGIDVYGDNMWIHDIMVTNKDECVTTKTNSHNFLIENIYCNSSGGCAIGSLGSGANVSNIVYRNVYTWDSNQMMMIKSNGGSGDVSNAVFENFIGHGNAYSLDLDSYWSSMDAIDGDGIYYHNITFQNWTGTAVDGETRPPIRVICPEDTPCTEIALVQIDLWVEEGGYDEYICKNAYGSGYCLDSATGTSTPYTTTTYVNSAPTGYEAPTMTDDLATAFGTSASIPIPTIPASFFPGVTPISAVAGSS</sequence>
<organism>
    <name type="scientific">Aspergillus niger</name>
    <dbReference type="NCBI Taxonomy" id="5061"/>
    <lineage>
        <taxon>Eukaryota</taxon>
        <taxon>Fungi</taxon>
        <taxon>Dikarya</taxon>
        <taxon>Ascomycota</taxon>
        <taxon>Pezizomycotina</taxon>
        <taxon>Eurotiomycetes</taxon>
        <taxon>Eurotiomycetidae</taxon>
        <taxon>Eurotiales</taxon>
        <taxon>Aspergillaceae</taxon>
        <taxon>Aspergillus</taxon>
        <taxon>Aspergillus subgen. Circumdati</taxon>
    </lineage>
</organism>
<reference key="1">
    <citation type="journal article" date="2006" name="Biochem. J.">
        <title>A new group of exo-acting family 28 glycoside hydrolases of Aspergillus niger that are involved in pectin degradation.</title>
        <authorList>
            <person name="Martens-Uzunova E.S."/>
            <person name="Zandleven J.S."/>
            <person name="Benen J.A."/>
            <person name="Awad H."/>
            <person name="Kools H.J."/>
            <person name="Beldman G."/>
            <person name="Voragen A.G."/>
            <person name="Van den Berg J.A."/>
            <person name="Schaap P.J."/>
        </authorList>
    </citation>
    <scope>NUCLEOTIDE SEQUENCE [GENOMIC DNA]</scope>
    <source>
        <strain>ATCC 9029 / NRRL 3 / CBS 120.49 / DSM 2466 / N400 / FGSC 732</strain>
    </source>
</reference>